<reference key="1">
    <citation type="journal article" date="2008" name="J. Biotechnol.">
        <title>The genome of Xanthomonas campestris pv. campestris B100 and its use for the reconstruction of metabolic pathways involved in xanthan biosynthesis.</title>
        <authorList>
            <person name="Vorhoelter F.-J."/>
            <person name="Schneiker S."/>
            <person name="Goesmann A."/>
            <person name="Krause L."/>
            <person name="Bekel T."/>
            <person name="Kaiser O."/>
            <person name="Linke B."/>
            <person name="Patschkowski T."/>
            <person name="Rueckert C."/>
            <person name="Schmid J."/>
            <person name="Sidhu V.K."/>
            <person name="Sieber V."/>
            <person name="Tauch A."/>
            <person name="Watt S.A."/>
            <person name="Weisshaar B."/>
            <person name="Becker A."/>
            <person name="Niehaus K."/>
            <person name="Puehler A."/>
        </authorList>
    </citation>
    <scope>NUCLEOTIDE SEQUENCE [LARGE SCALE GENOMIC DNA]</scope>
    <source>
        <strain>B100</strain>
    </source>
</reference>
<accession>B0RS40</accession>
<protein>
    <recommendedName>
        <fullName evidence="1">Putative membrane protein insertion efficiency factor</fullName>
    </recommendedName>
</protein>
<evidence type="ECO:0000255" key="1">
    <source>
        <dbReference type="HAMAP-Rule" id="MF_00386"/>
    </source>
</evidence>
<evidence type="ECO:0000256" key="2">
    <source>
        <dbReference type="SAM" id="MobiDB-lite"/>
    </source>
</evidence>
<name>YIDD_XANCB</name>
<gene>
    <name type="ordered locus">xcc-b100_1922</name>
</gene>
<sequence>MAYHWQVIGRLLIALLRFYKRFISPLLGPRCRFAPSCSEYAMTAIARFGPLRGSWLAARRLGRCHPFHPGGFDPVPDAPASSPSSCRCKGPHP</sequence>
<keyword id="KW-0997">Cell inner membrane</keyword>
<keyword id="KW-1003">Cell membrane</keyword>
<keyword id="KW-0472">Membrane</keyword>
<feature type="chain" id="PRO_1000122678" description="Putative membrane protein insertion efficiency factor">
    <location>
        <begin position="1"/>
        <end position="93"/>
    </location>
</feature>
<feature type="region of interest" description="Disordered" evidence="2">
    <location>
        <begin position="74"/>
        <end position="93"/>
    </location>
</feature>
<feature type="compositionally biased region" description="Low complexity" evidence="2">
    <location>
        <begin position="74"/>
        <end position="85"/>
    </location>
</feature>
<organism>
    <name type="scientific">Xanthomonas campestris pv. campestris (strain B100)</name>
    <dbReference type="NCBI Taxonomy" id="509169"/>
    <lineage>
        <taxon>Bacteria</taxon>
        <taxon>Pseudomonadati</taxon>
        <taxon>Pseudomonadota</taxon>
        <taxon>Gammaproteobacteria</taxon>
        <taxon>Lysobacterales</taxon>
        <taxon>Lysobacteraceae</taxon>
        <taxon>Xanthomonas</taxon>
    </lineage>
</organism>
<comment type="function">
    <text evidence="1">Could be involved in insertion of integral membrane proteins into the membrane.</text>
</comment>
<comment type="subcellular location">
    <subcellularLocation>
        <location evidence="1">Cell inner membrane</location>
        <topology evidence="1">Peripheral membrane protein</topology>
        <orientation evidence="1">Cytoplasmic side</orientation>
    </subcellularLocation>
</comment>
<comment type="similarity">
    <text evidence="1">Belongs to the UPF0161 family.</text>
</comment>
<proteinExistence type="inferred from homology"/>
<dbReference type="EMBL" id="AM920689">
    <property type="protein sequence ID" value="CAP51275.1"/>
    <property type="molecule type" value="Genomic_DNA"/>
</dbReference>
<dbReference type="KEGG" id="xca:xcc-b100_1922"/>
<dbReference type="HOGENOM" id="CLU_144811_2_2_6"/>
<dbReference type="Proteomes" id="UP000001188">
    <property type="component" value="Chromosome"/>
</dbReference>
<dbReference type="GO" id="GO:0005886">
    <property type="term" value="C:plasma membrane"/>
    <property type="evidence" value="ECO:0007669"/>
    <property type="project" value="UniProtKB-SubCell"/>
</dbReference>
<dbReference type="HAMAP" id="MF_00386">
    <property type="entry name" value="UPF0161_YidD"/>
    <property type="match status" value="1"/>
</dbReference>
<dbReference type="InterPro" id="IPR002696">
    <property type="entry name" value="Membr_insert_effic_factor_YidD"/>
</dbReference>
<dbReference type="NCBIfam" id="TIGR00278">
    <property type="entry name" value="membrane protein insertion efficiency factor YidD"/>
    <property type="match status" value="1"/>
</dbReference>
<dbReference type="PANTHER" id="PTHR33383">
    <property type="entry name" value="MEMBRANE PROTEIN INSERTION EFFICIENCY FACTOR-RELATED"/>
    <property type="match status" value="1"/>
</dbReference>
<dbReference type="PANTHER" id="PTHR33383:SF1">
    <property type="entry name" value="MEMBRANE PROTEIN INSERTION EFFICIENCY FACTOR-RELATED"/>
    <property type="match status" value="1"/>
</dbReference>
<dbReference type="Pfam" id="PF01809">
    <property type="entry name" value="YidD"/>
    <property type="match status" value="1"/>
</dbReference>
<dbReference type="SMART" id="SM01234">
    <property type="entry name" value="Haemolytic"/>
    <property type="match status" value="1"/>
</dbReference>